<accession>Q80GM6</accession>
<dbReference type="EC" id="2.7.7.-"/>
<dbReference type="EC" id="3.1.21.-"/>
<dbReference type="EMBL" id="S64567">
    <property type="protein sequence ID" value="AAP13956.1"/>
    <property type="status" value="ALT_SEQ"/>
    <property type="molecule type" value="Genomic_DNA"/>
</dbReference>
<dbReference type="EMBL" id="S64567">
    <property type="protein sequence ID" value="AAP13957.1"/>
    <property type="status" value="ALT_SEQ"/>
    <property type="molecule type" value="Genomic_DNA"/>
</dbReference>
<dbReference type="EMBL" id="M82918">
    <property type="protein sequence ID" value="AAA47830.1"/>
    <property type="status" value="ALT_SEQ"/>
    <property type="molecule type" value="Genomic_DNA"/>
</dbReference>
<dbReference type="SMR" id="Q80GM6"/>
<dbReference type="KEGG" id="vg:940472"/>
<dbReference type="Proteomes" id="UP000007230">
    <property type="component" value="Genome"/>
</dbReference>
<dbReference type="Proteomes" id="UP000204673">
    <property type="component" value="Genome"/>
</dbReference>
<dbReference type="GO" id="GO:0042025">
    <property type="term" value="C:host cell nucleus"/>
    <property type="evidence" value="ECO:0007669"/>
    <property type="project" value="UniProtKB-SubCell"/>
</dbReference>
<dbReference type="GO" id="GO:0005524">
    <property type="term" value="F:ATP binding"/>
    <property type="evidence" value="ECO:0007669"/>
    <property type="project" value="UniProtKB-KW"/>
</dbReference>
<dbReference type="GO" id="GO:0003677">
    <property type="term" value="F:DNA binding"/>
    <property type="evidence" value="ECO:0007669"/>
    <property type="project" value="UniProtKB-KW"/>
</dbReference>
<dbReference type="GO" id="GO:0016888">
    <property type="term" value="F:endodeoxyribonuclease activity, producing 5'-phosphomonoesters"/>
    <property type="evidence" value="ECO:0007669"/>
    <property type="project" value="InterPro"/>
</dbReference>
<dbReference type="GO" id="GO:0004386">
    <property type="term" value="F:helicase activity"/>
    <property type="evidence" value="ECO:0007669"/>
    <property type="project" value="UniProtKB-KW"/>
</dbReference>
<dbReference type="GO" id="GO:0046872">
    <property type="term" value="F:metal ion binding"/>
    <property type="evidence" value="ECO:0007669"/>
    <property type="project" value="UniProtKB-KW"/>
</dbReference>
<dbReference type="GO" id="GO:0016779">
    <property type="term" value="F:nucleotidyltransferase activity"/>
    <property type="evidence" value="ECO:0007669"/>
    <property type="project" value="UniProtKB-KW"/>
</dbReference>
<dbReference type="GO" id="GO:0005198">
    <property type="term" value="F:structural molecule activity"/>
    <property type="evidence" value="ECO:0007669"/>
    <property type="project" value="InterPro"/>
</dbReference>
<dbReference type="GO" id="GO:0006260">
    <property type="term" value="P:DNA replication"/>
    <property type="evidence" value="ECO:0007669"/>
    <property type="project" value="UniProtKB-KW"/>
</dbReference>
<dbReference type="Gene3D" id="3.40.1310.20">
    <property type="match status" value="1"/>
</dbReference>
<dbReference type="InterPro" id="IPR049912">
    <property type="entry name" value="CRESS_DNA_REP"/>
</dbReference>
<dbReference type="InterPro" id="IPR001146">
    <property type="entry name" value="Gemini_AL1_MSV"/>
</dbReference>
<dbReference type="InterPro" id="IPR001191">
    <property type="entry name" value="Gemini_AL1_REP"/>
</dbReference>
<dbReference type="InterPro" id="IPR022692">
    <property type="entry name" value="Gemini_AL1_REP_central"/>
</dbReference>
<dbReference type="Pfam" id="PF00799">
    <property type="entry name" value="Gemini_AL1"/>
    <property type="match status" value="1"/>
</dbReference>
<dbReference type="Pfam" id="PF08283">
    <property type="entry name" value="Gemini_AL1_M"/>
    <property type="match status" value="1"/>
</dbReference>
<dbReference type="PRINTS" id="PR00227">
    <property type="entry name" value="GEMCOATAL1"/>
</dbReference>
<dbReference type="PRINTS" id="PR00229">
    <property type="entry name" value="GEMCOATMSVL1"/>
</dbReference>
<dbReference type="SUPFAM" id="SSF55464">
    <property type="entry name" value="Origin of replication-binding domain, RBD-like"/>
    <property type="match status" value="1"/>
</dbReference>
<dbReference type="PROSITE" id="PS52020">
    <property type="entry name" value="CRESS_DNA_REP"/>
    <property type="match status" value="1"/>
</dbReference>
<name>REP_SSVN</name>
<comment type="function">
    <text evidence="1">Essential for the replication of viral ssDNA. The closed circular ssDNA genome is first converted to a superhelical dsDNA. Rep binds a specific region at the genome origin of replication. It introduces an endonucleolytic nick within the conserved sequence 5'-TAATATTAC-3' in the intergenic region of the genome present in all geminiviruses, thereby initiating the rolling circle replication (RCR). Following cleavage, binds covalently to the 5'-phosphate of DNA as a tyrosyl ester. The cleavage gives rise to a free 3'-OH that serves as a primer for the cellular DNA polymerase. The polymerase synthesizes the (+) strand DNA by rolling circle mechanism. After one round of replication, a Rep-catalyzed nucleotidyl transfer reaction releases a circular single-stranded virus genome, thereby terminating the replication. Displays origin-specific DNA cleavage, nucleotidyl transferase, ATPase and helicase activities. Acts as an inhibitor of C-sense gene transcription (By similarity).</text>
</comment>
<comment type="cofactor">
    <cofactor evidence="3">
        <name>Mg(2+)</name>
        <dbReference type="ChEBI" id="CHEBI:18420"/>
    </cofactor>
    <cofactor evidence="3">
        <name>Mn(2+)</name>
        <dbReference type="ChEBI" id="CHEBI:29035"/>
    </cofactor>
    <text evidence="3">Divalent metal cations, possibly Mg(2+) or Mn(2+).</text>
</comment>
<comment type="subunit">
    <text>Homooligomer. Rep binds to repeated DNA motifs (iterons). Forms the O-complex, which is a Rep-DNA complex involved in the initiation of RCR. Part of the C- and V-complexes which are RepA-Rep-DNA complexes involved in the c-sense and v-sense transcription.</text>
</comment>
<comment type="subcellular location">
    <subcellularLocation>
        <location evidence="1">Host nucleus</location>
    </subcellularLocation>
</comment>
<comment type="alternative products">
    <event type="alternative splicing"/>
    <isoform>
        <id>Q80GM6-1</id>
        <name>Rep</name>
        <sequence type="displayed"/>
    </isoform>
    <isoform>
        <id>Q89822-1</id>
        <name>RepA</name>
        <sequence type="external"/>
    </isoform>
</comment>
<comment type="domain">
    <text>There are 3 rolling circle replication (RCR) motifs. RCR-2 is probably involved in metal coordination. RCR-3 is required for phosphodiester bond cleavage for initiation of RCR.</text>
</comment>
<comment type="similarity">
    <text evidence="4">Belongs to the geminiviridae Rep protein family.</text>
</comment>
<comment type="sequence caution" evidence="4">
    <conflict type="erroneous gene model prediction">
        <sequence resource="EMBL-CDS" id="AAA47830"/>
    </conflict>
</comment>
<comment type="sequence caution" evidence="4">
    <conflict type="erroneous gene model prediction">
        <sequence resource="EMBL-CDS" id="AAP13956"/>
    </conflict>
</comment>
<comment type="sequence caution" evidence="4">
    <conflict type="erroneous gene model prediction">
        <sequence resource="EMBL-CDS" id="AAP13957"/>
    </conflict>
</comment>
<protein>
    <recommendedName>
        <fullName>Replication-associated protein</fullName>
        <shortName>Rep</shortName>
        <ecNumber>2.7.7.-</ecNumber>
        <ecNumber>3.1.21.-</ecNumber>
    </recommendedName>
</protein>
<sequence>MSTVGSTVSSTPSRRFKHRNVNTFLTYSRCPLEPEAVGLHIWSLIAHWTPVYVLSVRETHEDGGYHIHVLAQSAKPVYTTDSGFFDIDGFHPNIQSAKSANKVRAYAMKNPVTYWERGTFIPRKTSFLGDSTEPNSKKQSKDDIVRDIIEHSTNKQEYLSMIQKALPYEWATKLQYFEYSANKLFPDIQEIYTSPFPQSTPALLDPTAINTWLENNLYQQNSNSNRKLSLYILGPTRTGKSSWARSLGRHNYWQNNVDWSSYDEDAEYNIIDDIPFKYCPCWKQLIGCQKDYIVNPKYGKRKKVASKSIPTIVLANEDEDWLRDMTPAQQDYFNANCETYMLEPGERFFSLPAVSATAHPSSEV</sequence>
<reference key="1">
    <citation type="journal article" date="1993" name="Arch. Virol.">
        <title>Complete nucleotide sequence of sugarcane streak Monogeminivirus.</title>
        <authorList>
            <person name="Hughes F.L."/>
            <person name="Rybicki E.P."/>
            <person name="Kirby R."/>
        </authorList>
    </citation>
    <scope>NUCLEOTIDE SEQUENCE [GENOMIC DNA]</scope>
</reference>
<gene>
    <name type="ORF">C1/C2</name>
</gene>
<keyword id="KW-0025">Alternative splicing</keyword>
<keyword id="KW-0067">ATP-binding</keyword>
<keyword id="KW-0190">Covalent protein-DNA linkage</keyword>
<keyword id="KW-0235">DNA replication</keyword>
<keyword id="KW-0238">DNA-binding</keyword>
<keyword id="KW-0255">Endonuclease</keyword>
<keyword id="KW-0347">Helicase</keyword>
<keyword id="KW-1048">Host nucleus</keyword>
<keyword id="KW-0378">Hydrolase</keyword>
<keyword id="KW-0479">Metal-binding</keyword>
<keyword id="KW-0511">Multifunctional enzyme</keyword>
<keyword id="KW-0540">Nuclease</keyword>
<keyword id="KW-0547">Nucleotide-binding</keyword>
<keyword id="KW-0548">Nucleotidyltransferase</keyword>
<keyword id="KW-1185">Reference proteome</keyword>
<keyword id="KW-0678">Repressor</keyword>
<keyword id="KW-0808">Transferase</keyword>
<evidence type="ECO:0000250" key="1"/>
<evidence type="ECO:0000255" key="2"/>
<evidence type="ECO:0000255" key="3">
    <source>
        <dbReference type="PROSITE-ProRule" id="PRU01364"/>
    </source>
</evidence>
<evidence type="ECO:0000305" key="4"/>
<proteinExistence type="inferred from homology"/>
<organism>
    <name type="scientific">Sugarcane streak virus (isolate South Africa)</name>
    <name type="common">SSV</name>
    <name type="synonym">Sugarcane streak virus (isolate Natal)</name>
    <dbReference type="NCBI Taxonomy" id="268781"/>
    <lineage>
        <taxon>Viruses</taxon>
        <taxon>Monodnaviria</taxon>
        <taxon>Shotokuvirae</taxon>
        <taxon>Cressdnaviricota</taxon>
        <taxon>Repensiviricetes</taxon>
        <taxon>Geplafuvirales</taxon>
        <taxon>Geminiviridae</taxon>
        <taxon>Mastrevirus</taxon>
        <taxon>Sugarcane streak virus</taxon>
    </lineage>
</organism>
<feature type="chain" id="PRO_0000316943" description="Replication-associated protein">
    <location>
        <begin position="1"/>
        <end position="364"/>
    </location>
</feature>
<feature type="domain" description="CRESS-DNA virus Rep endonuclease" evidence="3">
    <location>
        <begin position="17"/>
        <end position="120"/>
    </location>
</feature>
<feature type="region of interest" description="Oligomerization" evidence="1">
    <location>
        <begin position="180"/>
        <end position="192"/>
    </location>
</feature>
<feature type="region of interest" description="Transactivation" evidence="1">
    <location>
        <begin position="257"/>
        <end position="275"/>
    </location>
</feature>
<feature type="short sequence motif" description="RCR-1" evidence="3">
    <location>
        <begin position="24"/>
        <end position="27"/>
    </location>
</feature>
<feature type="short sequence motif" description="RCR-2" evidence="3">
    <location>
        <begin position="66"/>
        <end position="68"/>
    </location>
</feature>
<feature type="short sequence motif" description="RCR-3" evidence="3">
    <location>
        <begin position="106"/>
        <end position="109"/>
    </location>
</feature>
<feature type="short sequence motif" description="Nuclear localization signal" evidence="2">
    <location>
        <begin position="297"/>
        <end position="308"/>
    </location>
</feature>
<feature type="active site" description="For DNA cleavage activity" evidence="3">
    <location>
        <position position="106"/>
    </location>
</feature>
<feature type="binding site" evidence="3">
    <location>
        <position position="58"/>
    </location>
    <ligand>
        <name>a divalent metal cation</name>
        <dbReference type="ChEBI" id="CHEBI:60240"/>
    </ligand>
</feature>
<feature type="binding site" evidence="3">
    <location>
        <position position="66"/>
    </location>
    <ligand>
        <name>a divalent metal cation</name>
        <dbReference type="ChEBI" id="CHEBI:60240"/>
    </ligand>
</feature>
<feature type="binding site" evidence="3">
    <location>
        <position position="68"/>
    </location>
    <ligand>
        <name>a divalent metal cation</name>
        <dbReference type="ChEBI" id="CHEBI:60240"/>
    </ligand>
</feature>
<feature type="binding site" evidence="3">
    <location>
        <position position="110"/>
    </location>
    <ligand>
        <name>a divalent metal cation</name>
        <dbReference type="ChEBI" id="CHEBI:60240"/>
    </ligand>
</feature>
<feature type="binding site" evidence="2">
    <location>
        <begin position="234"/>
        <end position="241"/>
    </location>
    <ligand>
        <name>ATP</name>
        <dbReference type="ChEBI" id="CHEBI:30616"/>
    </ligand>
</feature>
<organismHost>
    <name type="scientific">Cenchrus echinatus</name>
    <dbReference type="NCBI Taxonomy" id="173841"/>
</organismHost>
<organismHost>
    <name type="scientific">Saccharum officinarum</name>
    <name type="common">Sugarcane</name>
    <dbReference type="NCBI Taxonomy" id="4547"/>
</organismHost>